<accession>Q9HXI4</accession>
<gene>
    <name evidence="5" type="primary">suhB</name>
    <name type="ordered locus">PA3818</name>
</gene>
<reference key="1">
    <citation type="journal article" date="2000" name="Nature">
        <title>Complete genome sequence of Pseudomonas aeruginosa PAO1, an opportunistic pathogen.</title>
        <authorList>
            <person name="Stover C.K."/>
            <person name="Pham X.-Q.T."/>
            <person name="Erwin A.L."/>
            <person name="Mizoguchi S.D."/>
            <person name="Warrener P."/>
            <person name="Hickey M.J."/>
            <person name="Brinkman F.S.L."/>
            <person name="Hufnagle W.O."/>
            <person name="Kowalik D.J."/>
            <person name="Lagrou M."/>
            <person name="Garber R.L."/>
            <person name="Goltry L."/>
            <person name="Tolentino E."/>
            <person name="Westbrock-Wadman S."/>
            <person name="Yuan Y."/>
            <person name="Brody L.L."/>
            <person name="Coulter S.N."/>
            <person name="Folger K.R."/>
            <person name="Kas A."/>
            <person name="Larbig K."/>
            <person name="Lim R.M."/>
            <person name="Smith K.A."/>
            <person name="Spencer D.H."/>
            <person name="Wong G.K.-S."/>
            <person name="Wu Z."/>
            <person name="Paulsen I.T."/>
            <person name="Reizer J."/>
            <person name="Saier M.H. Jr."/>
            <person name="Hancock R.E.W."/>
            <person name="Lory S."/>
            <person name="Olson M.V."/>
        </authorList>
    </citation>
    <scope>NUCLEOTIDE SEQUENCE [LARGE SCALE GENOMIC DNA]</scope>
    <source>
        <strain>ATCC 15692 / DSM 22644 / CIP 104116 / JCM 14847 / LMG 12228 / 1C / PRS 101 / PAO1</strain>
    </source>
</reference>
<reference key="2">
    <citation type="journal article" date="2013" name="MBio">
        <title>SuhB is a regulator of multiple virulence genes and essential for pathogenesis of Pseudomonas aeruginosa.</title>
        <authorList>
            <person name="Li K."/>
            <person name="Xu C."/>
            <person name="Jin Y."/>
            <person name="Sun Z."/>
            <person name="Liu C."/>
            <person name="Shi J."/>
            <person name="Chen G."/>
            <person name="Chen R."/>
            <person name="Jin S."/>
            <person name="Wu W."/>
        </authorList>
    </citation>
    <scope>FUNCTION</scope>
    <scope>INDUCTION</scope>
    <scope>DISRUPTION PHENOTYPE</scope>
    <source>
        <strain>PAK</strain>
    </source>
</reference>
<reference key="3">
    <citation type="journal article" date="2015" name="Mol. Microbiol.">
        <title>SuhB is a novel ribosome associated protein that regulates expression of MexXY by modulating ribosome stalling in Pseudomonas aeruginosa.</title>
        <authorList>
            <person name="Shi J."/>
            <person name="Jin Y."/>
            <person name="Bian T."/>
            <person name="Li K."/>
            <person name="Sun Z."/>
            <person name="Cheng Z."/>
            <person name="Jin S."/>
            <person name="Wu W."/>
        </authorList>
    </citation>
    <scope>FUNCTION</scope>
    <scope>SUBUNIT</scope>
    <scope>DISRUPTION PHENOTYPE</scope>
    <source>
        <strain>PAK</strain>
    </source>
</reference>
<evidence type="ECO:0000250" key="1"/>
<evidence type="ECO:0000250" key="2">
    <source>
        <dbReference type="UniProtKB" id="P0ADG4"/>
    </source>
</evidence>
<evidence type="ECO:0000269" key="3">
    <source>
    </source>
</evidence>
<evidence type="ECO:0000269" key="4">
    <source>
    </source>
</evidence>
<evidence type="ECO:0000303" key="5">
    <source>
    </source>
</evidence>
<evidence type="ECO:0000305" key="6"/>
<dbReference type="EC" id="3.1.3.25"/>
<dbReference type="EMBL" id="AE004091">
    <property type="protein sequence ID" value="AAG07205.1"/>
    <property type="molecule type" value="Genomic_DNA"/>
</dbReference>
<dbReference type="PIR" id="C83169">
    <property type="entry name" value="C83169"/>
</dbReference>
<dbReference type="RefSeq" id="NP_252507.1">
    <property type="nucleotide sequence ID" value="NC_002516.2"/>
</dbReference>
<dbReference type="RefSeq" id="WP_003092845.1">
    <property type="nucleotide sequence ID" value="NZ_QZGE01000001.1"/>
</dbReference>
<dbReference type="PDB" id="8WDQ">
    <property type="method" value="X-ray"/>
    <property type="resolution" value="2.20 A"/>
    <property type="chains" value="A/B=1-271"/>
</dbReference>
<dbReference type="PDB" id="8WIP">
    <property type="method" value="X-ray"/>
    <property type="resolution" value="2.60 A"/>
    <property type="chains" value="A/B=1-271"/>
</dbReference>
<dbReference type="PDBsum" id="8WDQ"/>
<dbReference type="PDBsum" id="8WIP"/>
<dbReference type="SMR" id="Q9HXI4"/>
<dbReference type="FunCoup" id="Q9HXI4">
    <property type="interactions" value="615"/>
</dbReference>
<dbReference type="STRING" id="208964.PA3818"/>
<dbReference type="PaxDb" id="208964-PA3818"/>
<dbReference type="DNASU" id="879908"/>
<dbReference type="GeneID" id="879908"/>
<dbReference type="KEGG" id="pae:PA3818"/>
<dbReference type="PATRIC" id="fig|208964.12.peg.3997"/>
<dbReference type="PseudoCAP" id="PA3818"/>
<dbReference type="HOGENOM" id="CLU_044118_0_4_6"/>
<dbReference type="InParanoid" id="Q9HXI4"/>
<dbReference type="OrthoDB" id="9785695at2"/>
<dbReference type="PhylomeDB" id="Q9HXI4"/>
<dbReference type="BioCyc" id="PAER208964:G1FZ6-3889-MONOMER"/>
<dbReference type="Proteomes" id="UP000002438">
    <property type="component" value="Chromosome"/>
</dbReference>
<dbReference type="GO" id="GO:0005737">
    <property type="term" value="C:cytoplasm"/>
    <property type="evidence" value="ECO:0007669"/>
    <property type="project" value="UniProtKB-SubCell"/>
</dbReference>
<dbReference type="GO" id="GO:0008934">
    <property type="term" value="F:inositol monophosphate 1-phosphatase activity"/>
    <property type="evidence" value="ECO:0000318"/>
    <property type="project" value="GO_Central"/>
</dbReference>
<dbReference type="GO" id="GO:0046872">
    <property type="term" value="F:metal ion binding"/>
    <property type="evidence" value="ECO:0007669"/>
    <property type="project" value="UniProtKB-KW"/>
</dbReference>
<dbReference type="GO" id="GO:0003723">
    <property type="term" value="F:RNA binding"/>
    <property type="evidence" value="ECO:0007669"/>
    <property type="project" value="UniProtKB-KW"/>
</dbReference>
<dbReference type="GO" id="GO:0006020">
    <property type="term" value="P:inositol metabolic process"/>
    <property type="evidence" value="ECO:0000318"/>
    <property type="project" value="GO_Central"/>
</dbReference>
<dbReference type="GO" id="GO:0046854">
    <property type="term" value="P:phosphatidylinositol phosphate biosynthetic process"/>
    <property type="evidence" value="ECO:0007669"/>
    <property type="project" value="InterPro"/>
</dbReference>
<dbReference type="GO" id="GO:0042254">
    <property type="term" value="P:ribosome biogenesis"/>
    <property type="evidence" value="ECO:0007669"/>
    <property type="project" value="UniProtKB-KW"/>
</dbReference>
<dbReference type="GO" id="GO:0007165">
    <property type="term" value="P:signal transduction"/>
    <property type="evidence" value="ECO:0000318"/>
    <property type="project" value="GO_Central"/>
</dbReference>
<dbReference type="GO" id="GO:0031564">
    <property type="term" value="P:transcription antitermination"/>
    <property type="evidence" value="ECO:0007669"/>
    <property type="project" value="UniProtKB-KW"/>
</dbReference>
<dbReference type="CDD" id="cd01639">
    <property type="entry name" value="IMPase"/>
    <property type="match status" value="1"/>
</dbReference>
<dbReference type="FunFam" id="3.30.540.10:FF:000003">
    <property type="entry name" value="Inositol-1-monophosphatase"/>
    <property type="match status" value="1"/>
</dbReference>
<dbReference type="FunFam" id="3.40.190.80:FF:000002">
    <property type="entry name" value="Inositol-1-monophosphatase"/>
    <property type="match status" value="1"/>
</dbReference>
<dbReference type="Gene3D" id="3.40.190.80">
    <property type="match status" value="1"/>
</dbReference>
<dbReference type="Gene3D" id="3.30.540.10">
    <property type="entry name" value="Fructose-1,6-Bisphosphatase, subunit A, domain 1"/>
    <property type="match status" value="1"/>
</dbReference>
<dbReference type="InterPro" id="IPR033942">
    <property type="entry name" value="IMPase"/>
</dbReference>
<dbReference type="InterPro" id="IPR020583">
    <property type="entry name" value="Inositol_monoP_metal-BS"/>
</dbReference>
<dbReference type="InterPro" id="IPR000760">
    <property type="entry name" value="Inositol_monophosphatase-like"/>
</dbReference>
<dbReference type="InterPro" id="IPR020550">
    <property type="entry name" value="Inositol_monophosphatase_CS"/>
</dbReference>
<dbReference type="InterPro" id="IPR022337">
    <property type="entry name" value="Inositol_monophosphatase_SuhB"/>
</dbReference>
<dbReference type="PANTHER" id="PTHR20854">
    <property type="entry name" value="INOSITOL MONOPHOSPHATASE"/>
    <property type="match status" value="1"/>
</dbReference>
<dbReference type="PANTHER" id="PTHR20854:SF4">
    <property type="entry name" value="INOSITOL-1-MONOPHOSPHATASE-RELATED"/>
    <property type="match status" value="1"/>
</dbReference>
<dbReference type="Pfam" id="PF00459">
    <property type="entry name" value="Inositol_P"/>
    <property type="match status" value="1"/>
</dbReference>
<dbReference type="PRINTS" id="PR00377">
    <property type="entry name" value="IMPHPHTASES"/>
</dbReference>
<dbReference type="PRINTS" id="PR01959">
    <property type="entry name" value="SBIMPHPHTASE"/>
</dbReference>
<dbReference type="SUPFAM" id="SSF56655">
    <property type="entry name" value="Carbohydrate phosphatase"/>
    <property type="match status" value="1"/>
</dbReference>
<dbReference type="PROSITE" id="PS00629">
    <property type="entry name" value="IMP_1"/>
    <property type="match status" value="1"/>
</dbReference>
<dbReference type="PROSITE" id="PS00630">
    <property type="entry name" value="IMP_2"/>
    <property type="match status" value="1"/>
</dbReference>
<proteinExistence type="evidence at protein level"/>
<sequence length="271" mass="29522">MQPMLNIALRAARSAGELIFRSIERLDVISVNEKDAKDYVTEVDRAAEQTIVAALRKAYPTHAIMGEEGGFIEGSGEGADYLWVIDPLDGTTNFIHGVPHFAVSIACKYKGRLEHAVVLDPVRQEEFTASRGRGAALNGRRLRVSGRKSLEGALLGTGFPFRDNQIDNLDNYLNMFRSLVGQTAGIRRAGAASLDLAYVAAGRYDAFWEFGLSEWDMAAGALLVQEAGGLVSDFTGSHEFLEKGHIVAGNTKCFKALLTTIQPHLPPSLKR</sequence>
<organism>
    <name type="scientific">Pseudomonas aeruginosa (strain ATCC 15692 / DSM 22644 / CIP 104116 / JCM 14847 / LMG 12228 / 1C / PRS 101 / PAO1)</name>
    <dbReference type="NCBI Taxonomy" id="208964"/>
    <lineage>
        <taxon>Bacteria</taxon>
        <taxon>Pseudomonadati</taxon>
        <taxon>Pseudomonadota</taxon>
        <taxon>Gammaproteobacteria</taxon>
        <taxon>Pseudomonadales</taxon>
        <taxon>Pseudomonadaceae</taxon>
        <taxon>Pseudomonas</taxon>
    </lineage>
</organism>
<keyword id="KW-0002">3D-structure</keyword>
<keyword id="KW-0143">Chaperone</keyword>
<keyword id="KW-0963">Cytoplasm</keyword>
<keyword id="KW-0378">Hydrolase</keyword>
<keyword id="KW-0460">Magnesium</keyword>
<keyword id="KW-0479">Metal-binding</keyword>
<keyword id="KW-1185">Reference proteome</keyword>
<keyword id="KW-0690">Ribosome biogenesis</keyword>
<keyword id="KW-0694">RNA-binding</keyword>
<keyword id="KW-0804">Transcription</keyword>
<keyword id="KW-0889">Transcription antitermination</keyword>
<keyword id="KW-0805">Transcription regulation</keyword>
<keyword id="KW-0843">Virulence</keyword>
<comment type="function">
    <text evidence="2">Part of the processive rRNA transcription and antitermination complex (rrnTAC). The complex forms an RNA-chaperone ring around the RNA exit tunnel of RNA polymerase (RNAP). It supports rapid transcription and antitermination of rRNA operons, cotranscriptional rRNA folding, and annealing of distal rRNA regions to allow correct ribosome biogenesis. This subunit may play a central role in organizing the structure.</text>
</comment>
<comment type="function">
    <text evidence="3 4">A ribosome-associated protein, deletion of which alters the expression of 494 genes, suggesting a role in global gene regulation (PubMed:26179141). Involved in control of pathogenesis-related genes. Required for the activation of virulence factors associated with acute infections (type 3 secretion system, T3SS) while suppressing virulence factors associated with chronic infections (biofilm formation and type 6 secretion system, T6SS). It probably acts at a post-transcriptional level (PubMed:24169572).</text>
</comment>
<comment type="catalytic activity">
    <reaction evidence="2">
        <text>a myo-inositol phosphate + H2O = myo-inositol + phosphate</text>
        <dbReference type="Rhea" id="RHEA:24056"/>
        <dbReference type="ChEBI" id="CHEBI:15377"/>
        <dbReference type="ChEBI" id="CHEBI:17268"/>
        <dbReference type="ChEBI" id="CHEBI:43474"/>
        <dbReference type="ChEBI" id="CHEBI:84139"/>
        <dbReference type="EC" id="3.1.3.25"/>
    </reaction>
</comment>
<comment type="cofactor">
    <cofactor evidence="2">
        <name>Mg(2+)</name>
        <dbReference type="ChEBI" id="CHEBI:18420"/>
    </cofactor>
</comment>
<comment type="subunit">
    <text evidence="2 4">Homodimer. The rRNA transcription and antitermination complex (rrnTAC) consists of RNA polymerase (RNAP), NusA, NusB, NusE (rpsJ), NusG, SubB, ribosomal protein S4, DNA and precursor rRNA; S4 is more flexible than other subunits (By similarity). Interacts with the ribosome and with RNA polymerase (PubMed:26179141).</text>
</comment>
<comment type="subcellular location">
    <subcellularLocation>
        <location evidence="2">Cytoplasm</location>
    </subcellularLocation>
</comment>
<comment type="induction">
    <text evidence="3">Transcription is strongly induced during mouse infection.</text>
</comment>
<comment type="disruption phenotype">
    <text evidence="3 4">Decreased expression of T3SS genes and effectors. Loss of cytotoxicity against human lung cell line A549, avirulent in a mouse infection model. Down-regulation of flagellar genes and up-regulation of T6SS structural genes and effectors, increased biofilm formation (PubMed:24169572). Grows less quickly at 37 degrees Celsius. Decreased susceptibility to antibiotics neomycin, streptomycin, gentamycin, spectinomycin, ciprofloxacin and ofloxacin. Increased ribosome stalling on leader peptide PA5471.1 mRNA, leads to increased expression of PA5471 and up-regulation of the MexXY efflux system (PubMed:26179141).</text>
</comment>
<comment type="similarity">
    <text evidence="6">Belongs to the inositol monophosphatase superfamily.</text>
</comment>
<name>SUHB_PSEAE</name>
<protein>
    <recommendedName>
        <fullName>Nus factor SuhB</fullName>
    </recommendedName>
    <alternativeName>
        <fullName>Inositol-1-monophosphatase</fullName>
        <shortName>I-1-Pase</shortName>
        <shortName>IMPase</shortName>
        <shortName>Inositol-1-phosphatase</shortName>
        <ecNumber>3.1.3.25</ecNumber>
    </alternativeName>
</protein>
<feature type="chain" id="PRO_0000142569" description="Nus factor SuhB">
    <location>
        <begin position="1"/>
        <end position="271"/>
    </location>
</feature>
<feature type="binding site" evidence="2">
    <location>
        <position position="67"/>
    </location>
    <ligand>
        <name>Mg(2+)</name>
        <dbReference type="ChEBI" id="CHEBI:18420"/>
    </ligand>
</feature>
<feature type="binding site" evidence="1">
    <location>
        <position position="67"/>
    </location>
    <ligand>
        <name>substrate</name>
    </ligand>
</feature>
<feature type="binding site" evidence="2">
    <location>
        <position position="86"/>
    </location>
    <ligand>
        <name>Mg(2+)</name>
        <dbReference type="ChEBI" id="CHEBI:18420"/>
    </ligand>
</feature>
<feature type="binding site" evidence="1">
    <location>
        <begin position="88"/>
        <end position="91"/>
    </location>
    <ligand>
        <name>substrate</name>
    </ligand>
</feature>
<feature type="binding site" evidence="2">
    <location>
        <position position="88"/>
    </location>
    <ligand>
        <name>Mg(2+)</name>
        <dbReference type="ChEBI" id="CHEBI:18420"/>
    </ligand>
</feature>
<feature type="binding site" evidence="1">
    <location>
        <position position="187"/>
    </location>
    <ligand>
        <name>substrate</name>
    </ligand>
</feature>
<feature type="binding site" evidence="1">
    <location>
        <position position="216"/>
    </location>
    <ligand>
        <name>substrate</name>
    </ligand>
</feature>